<proteinExistence type="evidence at protein level"/>
<name>AMP_AMACA</name>
<keyword id="KW-0002">3D-structure</keyword>
<keyword id="KW-0044">Antibiotic</keyword>
<keyword id="KW-0929">Antimicrobial</keyword>
<keyword id="KW-0147">Chitin-binding</keyword>
<keyword id="KW-0903">Direct protein sequencing</keyword>
<keyword id="KW-1015">Disulfide bond</keyword>
<keyword id="KW-0295">Fungicide</keyword>
<keyword id="KW-0611">Plant defense</keyword>
<keyword id="KW-0732">Signal</keyword>
<protein>
    <recommendedName>
        <fullName>Antimicrobial peptide 2</fullName>
        <shortName>AMP2</shortName>
    </recommendedName>
    <component>
        <recommendedName>
            <fullName>Antimicrobial peptide 1</fullName>
            <shortName>AMP1</shortName>
        </recommendedName>
    </component>
</protein>
<organism>
    <name type="scientific">Amaranthus caudatus</name>
    <name type="common">Love-lies-bleeding</name>
    <name type="synonym">Inca-wheat</name>
    <dbReference type="NCBI Taxonomy" id="3567"/>
    <lineage>
        <taxon>Eukaryota</taxon>
        <taxon>Viridiplantae</taxon>
        <taxon>Streptophyta</taxon>
        <taxon>Embryophyta</taxon>
        <taxon>Tracheophyta</taxon>
        <taxon>Spermatophyta</taxon>
        <taxon>Magnoliopsida</taxon>
        <taxon>eudicotyledons</taxon>
        <taxon>Gunneridae</taxon>
        <taxon>Pentapetalae</taxon>
        <taxon>Caryophyllales</taxon>
        <taxon>Amaranthaceae</taxon>
        <taxon>Amaranthus</taxon>
    </lineage>
</organism>
<feature type="signal peptide" evidence="1">
    <location>
        <begin position="1"/>
        <end position="25"/>
    </location>
</feature>
<feature type="peptide" id="PRO_0000005275" description="Antimicrobial peptide 2">
    <location>
        <begin position="26"/>
        <end position="55"/>
    </location>
</feature>
<feature type="peptide" id="PRO_0000005276" description="Antimicrobial peptide 1">
    <location>
        <begin position="26"/>
        <end position="54"/>
    </location>
</feature>
<feature type="propeptide" id="PRO_0000005277" description="Removed in mature form">
    <location>
        <begin position="56"/>
        <end position="86"/>
    </location>
</feature>
<feature type="domain" description="Chitin-binding type-1">
    <location>
        <begin position="29"/>
        <end position="53"/>
    </location>
</feature>
<feature type="disulfide bond" evidence="2">
    <location>
        <begin position="29"/>
        <end position="40"/>
    </location>
</feature>
<feature type="disulfide bond" evidence="2">
    <location>
        <begin position="34"/>
        <end position="46"/>
    </location>
</feature>
<feature type="disulfide bond" evidence="2">
    <location>
        <begin position="39"/>
        <end position="53"/>
    </location>
</feature>
<feature type="strand" evidence="4">
    <location>
        <begin position="30"/>
        <end position="32"/>
    </location>
</feature>
<feature type="strand" evidence="4">
    <location>
        <begin position="46"/>
        <end position="49"/>
    </location>
</feature>
<feature type="helix" evidence="4">
    <location>
        <begin position="50"/>
        <end position="53"/>
    </location>
</feature>
<accession>P27275</accession>
<reference key="1">
    <citation type="journal article" date="1993" name="Plant Mol. Biol.">
        <title>Cloning and characterization of a cDNA encoding an antimicrobial chitin-binding protein from amaranth, Amaranthus caudatus.</title>
        <authorList>
            <person name="de Bolle M.F.C."/>
            <person name="David K.M.M."/>
            <person name="Rees S.B."/>
            <person name="Vanderleyden J."/>
            <person name="Cammue B.P.A."/>
            <person name="Broekaert W.F."/>
        </authorList>
    </citation>
    <scope>NUCLEOTIDE SEQUENCE [MRNA]</scope>
    <source>
        <tissue>Seed</tissue>
    </source>
</reference>
<reference key="2">
    <citation type="journal article" date="1992" name="Biochemistry">
        <title>Antimicrobial peptides from Amaranthus caudatus seeds with sequence homology to the cysteine/glycine-rich domain of chitin-binding proteins.</title>
        <authorList>
            <person name="Broekaert W.F."/>
            <person name="Marien W."/>
            <person name="Terras F.R.G."/>
            <person name="de Bolle M.F.C."/>
            <person name="Proost P."/>
            <person name="van Damme J."/>
            <person name="Dillen L."/>
            <person name="Claeys M."/>
            <person name="Rees S.B."/>
            <person name="Vanderleyden J."/>
            <person name="Cammue B.P.A."/>
        </authorList>
    </citation>
    <scope>PROTEIN SEQUENCE OF 26-55</scope>
    <source>
        <tissue>Seed</tissue>
    </source>
</reference>
<reference key="3">
    <citation type="journal article" date="1996" name="J. Mol. Biol.">
        <title>H NMR study of the solution structure of Ac-AMP2, a sugar binding antimicrobial protein isolated from Amaranthus caudatus.</title>
        <authorList>
            <person name="Martins J.C."/>
            <person name="Maes D."/>
            <person name="Loris R."/>
            <person name="Pepermans H.A.M."/>
            <person name="Wyns L."/>
            <person name="Willem R."/>
            <person name="Verheyden P."/>
        </authorList>
    </citation>
    <scope>STRUCTURE BY NMR</scope>
</reference>
<reference key="4">
    <citation type="journal article" date="1997" name="J. Pept. Res.">
        <title>Location of the three disulfide bonds in an antimicrobial peptide from Amaranthus caudatus using mass spectrometry.</title>
        <authorList>
            <person name="el Boiyoussfi M."/>
            <person name="Laus G."/>
            <person name="Verheyden P."/>
            <person name="Wyns L."/>
            <person name="Tourwe D."/>
            <person name="van Binst G."/>
        </authorList>
    </citation>
    <scope>DISULFIDE BONDS</scope>
</reference>
<evidence type="ECO:0000269" key="1">
    <source>
    </source>
</evidence>
<evidence type="ECO:0000269" key="2">
    <source>
    </source>
</evidence>
<evidence type="ECO:0000305" key="3"/>
<evidence type="ECO:0007829" key="4">
    <source>
        <dbReference type="PDB" id="1MMC"/>
    </source>
</evidence>
<comment type="function">
    <text>Chitin-binding protein with a defensive function against numerous chitin containing fungal pathogens. It is also a potent inhibitor of Gram-positive bacteria.</text>
</comment>
<comment type="subunit">
    <text evidence="3">Homodimer.</text>
</comment>
<comment type="miscellaneous">
    <text>Its chitin-binding activity is strongly inhibited by divalent cations.</text>
</comment>
<sequence length="86" mass="8912">MVNMKCVALIVIVMMAFMMVDPSMGVGECVRGRCPSGMCCSQFGYCGKGPKYCGRASTTVDHQADVAATKTAKNPTDAKLAGAGSP</sequence>
<dbReference type="EMBL" id="X72641">
    <property type="protein sequence ID" value="CAA51210.1"/>
    <property type="molecule type" value="mRNA"/>
</dbReference>
<dbReference type="PIR" id="S37381">
    <property type="entry name" value="S37381"/>
</dbReference>
<dbReference type="PDB" id="1MMC">
    <property type="method" value="NMR"/>
    <property type="chains" value="A=26-55"/>
</dbReference>
<dbReference type="PDB" id="1ZNT">
    <property type="method" value="NMR"/>
    <property type="chains" value="A=26-55"/>
</dbReference>
<dbReference type="PDB" id="1ZUV">
    <property type="method" value="NMR"/>
    <property type="chains" value="A=26-55"/>
</dbReference>
<dbReference type="PDB" id="1ZWU">
    <property type="method" value="NMR"/>
    <property type="chains" value="A=26-55"/>
</dbReference>
<dbReference type="PDBsum" id="1MMC"/>
<dbReference type="PDBsum" id="1ZNT"/>
<dbReference type="PDBsum" id="1ZUV"/>
<dbReference type="PDBsum" id="1ZWU"/>
<dbReference type="BMRB" id="P27275"/>
<dbReference type="SMR" id="P27275"/>
<dbReference type="CAZy" id="CBM18">
    <property type="family name" value="Carbohydrate-Binding Module Family 18"/>
</dbReference>
<dbReference type="UniLectin" id="P27275"/>
<dbReference type="EvolutionaryTrace" id="P27275"/>
<dbReference type="GO" id="GO:0008061">
    <property type="term" value="F:chitin binding"/>
    <property type="evidence" value="ECO:0007669"/>
    <property type="project" value="UniProtKB-KW"/>
</dbReference>
<dbReference type="GO" id="GO:0042742">
    <property type="term" value="P:defense response to bacterium"/>
    <property type="evidence" value="ECO:0007669"/>
    <property type="project" value="UniProtKB-KW"/>
</dbReference>
<dbReference type="GO" id="GO:0050832">
    <property type="term" value="P:defense response to fungus"/>
    <property type="evidence" value="ECO:0007669"/>
    <property type="project" value="UniProtKB-KW"/>
</dbReference>
<dbReference type="GO" id="GO:0031640">
    <property type="term" value="P:killing of cells of another organism"/>
    <property type="evidence" value="ECO:0007669"/>
    <property type="project" value="UniProtKB-KW"/>
</dbReference>
<dbReference type="CDD" id="cd00035">
    <property type="entry name" value="ChtBD1"/>
    <property type="match status" value="1"/>
</dbReference>
<dbReference type="FunFam" id="3.30.60.10:FF:000006">
    <property type="entry name" value="Agglutinin isolectin 1"/>
    <property type="match status" value="1"/>
</dbReference>
<dbReference type="Gene3D" id="3.30.60.10">
    <property type="entry name" value="Endochitinase-like"/>
    <property type="match status" value="1"/>
</dbReference>
<dbReference type="InterPro" id="IPR013006">
    <property type="entry name" value="Antimicrobial_C6_CS"/>
</dbReference>
<dbReference type="InterPro" id="IPR001002">
    <property type="entry name" value="Chitin-bd_1"/>
</dbReference>
<dbReference type="InterPro" id="IPR018371">
    <property type="entry name" value="Chitin-binding_1_CS"/>
</dbReference>
<dbReference type="InterPro" id="IPR036861">
    <property type="entry name" value="Endochitinase-like_sf"/>
</dbReference>
<dbReference type="Pfam" id="PF00187">
    <property type="entry name" value="Chitin_bind_1"/>
    <property type="match status" value="1"/>
</dbReference>
<dbReference type="PRINTS" id="PR00451">
    <property type="entry name" value="CHITINBINDNG"/>
</dbReference>
<dbReference type="SMART" id="SM00270">
    <property type="entry name" value="ChtBD1"/>
    <property type="match status" value="1"/>
</dbReference>
<dbReference type="SUPFAM" id="SSF57016">
    <property type="entry name" value="Plant lectins/antimicrobial peptides"/>
    <property type="match status" value="1"/>
</dbReference>
<dbReference type="PROSITE" id="PS00026">
    <property type="entry name" value="CHIT_BIND_I_1"/>
    <property type="match status" value="1"/>
</dbReference>
<dbReference type="PROSITE" id="PS60011">
    <property type="entry name" value="PLANT_C6_AMP"/>
    <property type="match status" value="1"/>
</dbReference>